<organism>
    <name type="scientific">Streptococcus suis (strain 05ZYH33)</name>
    <dbReference type="NCBI Taxonomy" id="391295"/>
    <lineage>
        <taxon>Bacteria</taxon>
        <taxon>Bacillati</taxon>
        <taxon>Bacillota</taxon>
        <taxon>Bacilli</taxon>
        <taxon>Lactobacillales</taxon>
        <taxon>Streptococcaceae</taxon>
        <taxon>Streptococcus</taxon>
    </lineage>
</organism>
<name>RECR_STRSY</name>
<sequence length="198" mass="21708">MLYPTPIAKLIDSYSKLPGIGIKTATRLAFYTIGMEDDVVNEFAKNLLAAKRDLSYCSICGNLTDQDPCAICQDSTRDQSTILIVEDSRDVTALENIQEYHGLYHVLHGLISPMNGIGPDDINLKTLLTRLMENEVTEVIVATNATADGEATSMYISRVLKPAGIKVTRLARGLAVGSDIEYADEVTLLRAIENRTEL</sequence>
<comment type="function">
    <text evidence="1">May play a role in DNA repair. It seems to be involved in an RecBC-independent recombinational process of DNA repair. It may act with RecF and RecO.</text>
</comment>
<comment type="similarity">
    <text evidence="1">Belongs to the RecR family.</text>
</comment>
<accession>A4VW30</accession>
<reference key="1">
    <citation type="journal article" date="2007" name="PLoS ONE">
        <title>A glimpse of streptococcal toxic shock syndrome from comparative genomics of S. suis 2 Chinese isolates.</title>
        <authorList>
            <person name="Chen C."/>
            <person name="Tang J."/>
            <person name="Dong W."/>
            <person name="Wang C."/>
            <person name="Feng Y."/>
            <person name="Wang J."/>
            <person name="Zheng F."/>
            <person name="Pan X."/>
            <person name="Liu D."/>
            <person name="Li M."/>
            <person name="Song Y."/>
            <person name="Zhu X."/>
            <person name="Sun H."/>
            <person name="Feng T."/>
            <person name="Guo Z."/>
            <person name="Ju A."/>
            <person name="Ge J."/>
            <person name="Dong Y."/>
            <person name="Sun W."/>
            <person name="Jiang Y."/>
            <person name="Wang J."/>
            <person name="Yan J."/>
            <person name="Yang H."/>
            <person name="Wang X."/>
            <person name="Gao G.F."/>
            <person name="Yang R."/>
            <person name="Wang J."/>
            <person name="Yu J."/>
        </authorList>
    </citation>
    <scope>NUCLEOTIDE SEQUENCE [LARGE SCALE GENOMIC DNA]</scope>
    <source>
        <strain>05ZYH33</strain>
    </source>
</reference>
<protein>
    <recommendedName>
        <fullName evidence="1">Recombination protein RecR</fullName>
    </recommendedName>
</protein>
<feature type="chain" id="PRO_1000001632" description="Recombination protein RecR">
    <location>
        <begin position="1"/>
        <end position="198"/>
    </location>
</feature>
<feature type="domain" description="Toprim" evidence="1">
    <location>
        <begin position="80"/>
        <end position="175"/>
    </location>
</feature>
<feature type="zinc finger region" description="C4-type" evidence="1">
    <location>
        <begin position="57"/>
        <end position="72"/>
    </location>
</feature>
<gene>
    <name evidence="1" type="primary">recR</name>
    <name type="ordered locus">SSU05_1353</name>
</gene>
<dbReference type="EMBL" id="CP000407">
    <property type="protein sequence ID" value="ABP90319.1"/>
    <property type="molecule type" value="Genomic_DNA"/>
</dbReference>
<dbReference type="SMR" id="A4VW30"/>
<dbReference type="STRING" id="391295.SSU05_1353"/>
<dbReference type="KEGG" id="ssu:SSU05_1353"/>
<dbReference type="eggNOG" id="COG0353">
    <property type="taxonomic scope" value="Bacteria"/>
</dbReference>
<dbReference type="HOGENOM" id="CLU_060739_1_0_9"/>
<dbReference type="GO" id="GO:0003677">
    <property type="term" value="F:DNA binding"/>
    <property type="evidence" value="ECO:0007669"/>
    <property type="project" value="UniProtKB-UniRule"/>
</dbReference>
<dbReference type="GO" id="GO:0008270">
    <property type="term" value="F:zinc ion binding"/>
    <property type="evidence" value="ECO:0007669"/>
    <property type="project" value="UniProtKB-KW"/>
</dbReference>
<dbReference type="GO" id="GO:0006310">
    <property type="term" value="P:DNA recombination"/>
    <property type="evidence" value="ECO:0007669"/>
    <property type="project" value="UniProtKB-UniRule"/>
</dbReference>
<dbReference type="GO" id="GO:0006281">
    <property type="term" value="P:DNA repair"/>
    <property type="evidence" value="ECO:0007669"/>
    <property type="project" value="UniProtKB-UniRule"/>
</dbReference>
<dbReference type="CDD" id="cd01025">
    <property type="entry name" value="TOPRIM_recR"/>
    <property type="match status" value="1"/>
</dbReference>
<dbReference type="Gene3D" id="3.30.60.80">
    <property type="match status" value="1"/>
</dbReference>
<dbReference type="Gene3D" id="3.40.1360.10">
    <property type="match status" value="1"/>
</dbReference>
<dbReference type="Gene3D" id="6.10.250.240">
    <property type="match status" value="1"/>
</dbReference>
<dbReference type="Gene3D" id="1.10.8.420">
    <property type="entry name" value="RecR Domain 1"/>
    <property type="match status" value="1"/>
</dbReference>
<dbReference type="HAMAP" id="MF_00017">
    <property type="entry name" value="RecR"/>
    <property type="match status" value="1"/>
</dbReference>
<dbReference type="InterPro" id="IPR000093">
    <property type="entry name" value="DNA_Rcmb_RecR"/>
</dbReference>
<dbReference type="InterPro" id="IPR023627">
    <property type="entry name" value="Rcmb_RecR"/>
</dbReference>
<dbReference type="InterPro" id="IPR015967">
    <property type="entry name" value="Rcmb_RecR_Znf"/>
</dbReference>
<dbReference type="InterPro" id="IPR006171">
    <property type="entry name" value="TOPRIM_dom"/>
</dbReference>
<dbReference type="InterPro" id="IPR034137">
    <property type="entry name" value="TOPRIM_RecR"/>
</dbReference>
<dbReference type="NCBIfam" id="TIGR00615">
    <property type="entry name" value="recR"/>
    <property type="match status" value="1"/>
</dbReference>
<dbReference type="PANTHER" id="PTHR30446">
    <property type="entry name" value="RECOMBINATION PROTEIN RECR"/>
    <property type="match status" value="1"/>
</dbReference>
<dbReference type="PANTHER" id="PTHR30446:SF0">
    <property type="entry name" value="RECOMBINATION PROTEIN RECR"/>
    <property type="match status" value="1"/>
</dbReference>
<dbReference type="Pfam" id="PF21175">
    <property type="entry name" value="RecR_C"/>
    <property type="match status" value="1"/>
</dbReference>
<dbReference type="Pfam" id="PF21176">
    <property type="entry name" value="RecR_HhH"/>
    <property type="match status" value="1"/>
</dbReference>
<dbReference type="Pfam" id="PF02132">
    <property type="entry name" value="RecR_ZnF"/>
    <property type="match status" value="1"/>
</dbReference>
<dbReference type="Pfam" id="PF13662">
    <property type="entry name" value="Toprim_4"/>
    <property type="match status" value="1"/>
</dbReference>
<dbReference type="SMART" id="SM00493">
    <property type="entry name" value="TOPRIM"/>
    <property type="match status" value="1"/>
</dbReference>
<dbReference type="SUPFAM" id="SSF111304">
    <property type="entry name" value="Recombination protein RecR"/>
    <property type="match status" value="1"/>
</dbReference>
<dbReference type="PROSITE" id="PS01300">
    <property type="entry name" value="RECR"/>
    <property type="match status" value="1"/>
</dbReference>
<dbReference type="PROSITE" id="PS50880">
    <property type="entry name" value="TOPRIM"/>
    <property type="match status" value="1"/>
</dbReference>
<keyword id="KW-0227">DNA damage</keyword>
<keyword id="KW-0233">DNA recombination</keyword>
<keyword id="KW-0234">DNA repair</keyword>
<keyword id="KW-0479">Metal-binding</keyword>
<keyword id="KW-0862">Zinc</keyword>
<keyword id="KW-0863">Zinc-finger</keyword>
<proteinExistence type="inferred from homology"/>
<evidence type="ECO:0000255" key="1">
    <source>
        <dbReference type="HAMAP-Rule" id="MF_00017"/>
    </source>
</evidence>